<gene>
    <name type="primary">ndhF</name>
</gene>
<feature type="chain" id="PRO_0000360952" description="NAD(P)H-quinone oxidoreductase subunit 5, chloroplastic">
    <location>
        <begin position="1"/>
        <end position="648"/>
    </location>
</feature>
<feature type="transmembrane region" description="Helical" evidence="2">
    <location>
        <begin position="7"/>
        <end position="27"/>
    </location>
</feature>
<feature type="transmembrane region" description="Helical" evidence="2">
    <location>
        <begin position="39"/>
        <end position="59"/>
    </location>
</feature>
<feature type="transmembrane region" description="Helical" evidence="2">
    <location>
        <begin position="89"/>
        <end position="109"/>
    </location>
</feature>
<feature type="transmembrane region" description="Helical" evidence="2">
    <location>
        <begin position="124"/>
        <end position="144"/>
    </location>
</feature>
<feature type="transmembrane region" description="Helical" evidence="2">
    <location>
        <begin position="147"/>
        <end position="167"/>
    </location>
</feature>
<feature type="transmembrane region" description="Helical" evidence="2">
    <location>
        <begin position="189"/>
        <end position="209"/>
    </location>
</feature>
<feature type="transmembrane region" description="Helical" evidence="2">
    <location>
        <begin position="215"/>
        <end position="235"/>
    </location>
</feature>
<feature type="transmembrane region" description="Helical" evidence="2">
    <location>
        <begin position="258"/>
        <end position="278"/>
    </location>
</feature>
<feature type="transmembrane region" description="Helical" evidence="2">
    <location>
        <begin position="289"/>
        <end position="309"/>
    </location>
</feature>
<feature type="transmembrane region" description="Helical" evidence="2">
    <location>
        <begin position="327"/>
        <end position="347"/>
    </location>
</feature>
<feature type="transmembrane region" description="Helical" evidence="2">
    <location>
        <begin position="354"/>
        <end position="374"/>
    </location>
</feature>
<feature type="transmembrane region" description="Helical" evidence="2">
    <location>
        <begin position="395"/>
        <end position="415"/>
    </location>
</feature>
<feature type="transmembrane region" description="Helical" evidence="2">
    <location>
        <begin position="432"/>
        <end position="452"/>
    </location>
</feature>
<feature type="transmembrane region" description="Helical" evidence="2">
    <location>
        <begin position="472"/>
        <end position="492"/>
    </location>
</feature>
<feature type="transmembrane region" description="Helical" evidence="2">
    <location>
        <begin position="518"/>
        <end position="538"/>
    </location>
</feature>
<feature type="transmembrane region" description="Helical" evidence="2">
    <location>
        <begin position="625"/>
        <end position="645"/>
    </location>
</feature>
<geneLocation type="chloroplast"/>
<sequence>MEIFHQAIWLIPVLPLSASMLSGIGLLTFRETTSDLRRLHGALAIGAMALSFVVSLGVLWNQLHGIAPVRWIIEWMLTDTFRLEIGYWVDPLTSTMLVVVTSVALLVMIYSDEYMHVDEGYVRFFVYLSIFTTSMLGLVLSPNLVQVYGFWELVGMCSYLLVGFWFTRPTAAEASQKAFITNRVGDFGLLLGILALYWMTGSFEFASIADRLGDLLIAIPSLRTIACIACILVFMGPIAKSAQFPLHVWLPDAMEGPTPISALIHAATMVAAGVFLVARMFPVFDQLPLVMELIAWTGTLTAFLGATMALTQSDIKKGLAYSTMSQLGYMIMALGTGAYSEALFHLTTHAYSKALLFLAAGSVIHGMEPVVGFSPMQNQNMHRMGGLRKYMPLTAMTFLLGTCSICGIPPLACFWSKDAILAEVFATHPTCWLIAWLTAGMTGFYMFRIYFLTFEGSFRSDLGRAKPKESHLGMVAPLIILAIPTVAIGSLGTPFAPVWETFVHAPGQLSSLDEEFDLAEFLEMAGSSVGIGLLGISLSSLMYRNYAIDATRISEYFSPLNRLFASKWYIDDLYAQVIVQGTRTIAQTLLIFDQRIIDGAVNLTAFGTLSAADTLKYWENGRVQFYILSIIFGVLFGSWLLTTHLSSL</sequence>
<accession>Q9TKV7</accession>
<proteinExistence type="inferred from homology"/>
<comment type="function">
    <text evidence="1">NDH shuttles electrons from NAD(P)H:plastoquinone, via FMN and iron-sulfur (Fe-S) centers, to quinones in the photosynthetic chain and possibly in a chloroplast respiratory chain. The immediate electron acceptor for the enzyme in this species is believed to be plastoquinone. Couples the redox reaction to proton translocation, and thus conserves the redox energy in a proton gradient (By similarity).</text>
</comment>
<comment type="catalytic activity">
    <reaction>
        <text>a plastoquinone + NADH + (n+1) H(+)(in) = a plastoquinol + NAD(+) + n H(+)(out)</text>
        <dbReference type="Rhea" id="RHEA:42608"/>
        <dbReference type="Rhea" id="RHEA-COMP:9561"/>
        <dbReference type="Rhea" id="RHEA-COMP:9562"/>
        <dbReference type="ChEBI" id="CHEBI:15378"/>
        <dbReference type="ChEBI" id="CHEBI:17757"/>
        <dbReference type="ChEBI" id="CHEBI:57540"/>
        <dbReference type="ChEBI" id="CHEBI:57945"/>
        <dbReference type="ChEBI" id="CHEBI:62192"/>
    </reaction>
</comment>
<comment type="catalytic activity">
    <reaction>
        <text>a plastoquinone + NADPH + (n+1) H(+)(in) = a plastoquinol + NADP(+) + n H(+)(out)</text>
        <dbReference type="Rhea" id="RHEA:42612"/>
        <dbReference type="Rhea" id="RHEA-COMP:9561"/>
        <dbReference type="Rhea" id="RHEA-COMP:9562"/>
        <dbReference type="ChEBI" id="CHEBI:15378"/>
        <dbReference type="ChEBI" id="CHEBI:17757"/>
        <dbReference type="ChEBI" id="CHEBI:57783"/>
        <dbReference type="ChEBI" id="CHEBI:58349"/>
        <dbReference type="ChEBI" id="CHEBI:62192"/>
    </reaction>
</comment>
<comment type="subunit">
    <text evidence="1">NDH is composed of at least 16 different subunits, 5 of which are encoded in the nucleus.</text>
</comment>
<comment type="subcellular location">
    <subcellularLocation>
        <location evidence="1">Plastid</location>
        <location evidence="1">Chloroplast thylakoid membrane</location>
        <topology evidence="1">Multi-pass membrane protein</topology>
    </subcellularLocation>
</comment>
<comment type="similarity">
    <text evidence="3">Belongs to the complex I subunit 5 family.</text>
</comment>
<evidence type="ECO:0000250" key="1"/>
<evidence type="ECO:0000255" key="2"/>
<evidence type="ECO:0000305" key="3"/>
<organism>
    <name type="scientific">Nephroselmis olivacea</name>
    <name type="common">Green alga</name>
    <dbReference type="NCBI Taxonomy" id="31312"/>
    <lineage>
        <taxon>Eukaryota</taxon>
        <taxon>Viridiplantae</taxon>
        <taxon>Chlorophyta</taxon>
        <taxon>Nephroselmidophyceae</taxon>
        <taxon>Nephroselmidales</taxon>
        <taxon>Nephroselmidaceae</taxon>
        <taxon>Nephroselmis</taxon>
    </lineage>
</organism>
<protein>
    <recommendedName>
        <fullName>NAD(P)H-quinone oxidoreductase subunit 5, chloroplastic</fullName>
        <ecNumber>7.1.1.-</ecNumber>
    </recommendedName>
    <alternativeName>
        <fullName>NAD(P)H dehydrogenase subunit 5</fullName>
    </alternativeName>
    <alternativeName>
        <fullName>NADH-plastoquinone oxidoreductase subunit 5</fullName>
    </alternativeName>
</protein>
<dbReference type="EC" id="7.1.1.-"/>
<dbReference type="EMBL" id="AF137379">
    <property type="protein sequence ID" value="AAD54890.1"/>
    <property type="molecule type" value="Genomic_DNA"/>
</dbReference>
<dbReference type="RefSeq" id="NP_050919.1">
    <property type="nucleotide sequence ID" value="NC_000927.1"/>
</dbReference>
<dbReference type="SMR" id="Q9TKV7"/>
<dbReference type="GeneID" id="801943"/>
<dbReference type="GO" id="GO:0009535">
    <property type="term" value="C:chloroplast thylakoid membrane"/>
    <property type="evidence" value="ECO:0007669"/>
    <property type="project" value="UniProtKB-SubCell"/>
</dbReference>
<dbReference type="GO" id="GO:0008137">
    <property type="term" value="F:NADH dehydrogenase (ubiquinone) activity"/>
    <property type="evidence" value="ECO:0007669"/>
    <property type="project" value="InterPro"/>
</dbReference>
<dbReference type="GO" id="GO:0048038">
    <property type="term" value="F:quinone binding"/>
    <property type="evidence" value="ECO:0007669"/>
    <property type="project" value="UniProtKB-KW"/>
</dbReference>
<dbReference type="GO" id="GO:0042773">
    <property type="term" value="P:ATP synthesis coupled electron transport"/>
    <property type="evidence" value="ECO:0007669"/>
    <property type="project" value="InterPro"/>
</dbReference>
<dbReference type="GO" id="GO:0015990">
    <property type="term" value="P:electron transport coupled proton transport"/>
    <property type="evidence" value="ECO:0007669"/>
    <property type="project" value="TreeGrafter"/>
</dbReference>
<dbReference type="Gene3D" id="1.20.5.2700">
    <property type="match status" value="1"/>
</dbReference>
<dbReference type="InterPro" id="IPR002128">
    <property type="entry name" value="NADH_UbQ_OxRdtase_chlpt_su5_C"/>
</dbReference>
<dbReference type="InterPro" id="IPR018393">
    <property type="entry name" value="NADHpl_OxRdtase_5_subgr"/>
</dbReference>
<dbReference type="InterPro" id="IPR001750">
    <property type="entry name" value="ND/Mrp_TM"/>
</dbReference>
<dbReference type="InterPro" id="IPR003945">
    <property type="entry name" value="NU5C-like"/>
</dbReference>
<dbReference type="InterPro" id="IPR001516">
    <property type="entry name" value="Proton_antipo_N"/>
</dbReference>
<dbReference type="NCBIfam" id="TIGR01974">
    <property type="entry name" value="NDH_I_L"/>
    <property type="match status" value="1"/>
</dbReference>
<dbReference type="NCBIfam" id="NF005141">
    <property type="entry name" value="PRK06590.1"/>
    <property type="match status" value="1"/>
</dbReference>
<dbReference type="PANTHER" id="PTHR42829">
    <property type="entry name" value="NADH-UBIQUINONE OXIDOREDUCTASE CHAIN 5"/>
    <property type="match status" value="1"/>
</dbReference>
<dbReference type="PANTHER" id="PTHR42829:SF2">
    <property type="entry name" value="NADH-UBIQUINONE OXIDOREDUCTASE CHAIN 5"/>
    <property type="match status" value="1"/>
</dbReference>
<dbReference type="Pfam" id="PF01010">
    <property type="entry name" value="Proton_antipo_C"/>
    <property type="match status" value="1"/>
</dbReference>
<dbReference type="Pfam" id="PF00361">
    <property type="entry name" value="Proton_antipo_M"/>
    <property type="match status" value="1"/>
</dbReference>
<dbReference type="Pfam" id="PF00662">
    <property type="entry name" value="Proton_antipo_N"/>
    <property type="match status" value="1"/>
</dbReference>
<dbReference type="PRINTS" id="PR01434">
    <property type="entry name" value="NADHDHGNASE5"/>
</dbReference>
<dbReference type="PRINTS" id="PR01435">
    <property type="entry name" value="NPOXDRDTASE5"/>
</dbReference>
<keyword id="KW-0150">Chloroplast</keyword>
<keyword id="KW-0472">Membrane</keyword>
<keyword id="KW-0520">NAD</keyword>
<keyword id="KW-0521">NADP</keyword>
<keyword id="KW-0934">Plastid</keyword>
<keyword id="KW-0618">Plastoquinone</keyword>
<keyword id="KW-0874">Quinone</keyword>
<keyword id="KW-0793">Thylakoid</keyword>
<keyword id="KW-1278">Translocase</keyword>
<keyword id="KW-0812">Transmembrane</keyword>
<keyword id="KW-1133">Transmembrane helix</keyword>
<keyword id="KW-0813">Transport</keyword>
<reference key="1">
    <citation type="journal article" date="1999" name="Proc. Natl. Acad. Sci. U.S.A.">
        <title>The complete chloroplast DNA sequence of the green alga Nephroselmis olivacea: insights into the architecture of ancestral chloroplast genomes.</title>
        <authorList>
            <person name="Turmel M."/>
            <person name="Otis C."/>
            <person name="Lemieux C."/>
        </authorList>
    </citation>
    <scope>NUCLEOTIDE SEQUENCE [LARGE SCALE GENOMIC DNA]</scope>
    <source>
        <strain>NIES-484 / S-N-5-8</strain>
    </source>
</reference>
<name>NU5C_NEPOL</name>